<dbReference type="EC" id="5.4.99.12" evidence="1"/>
<dbReference type="EMBL" id="CP000125">
    <property type="protein sequence ID" value="ABA51852.1"/>
    <property type="molecule type" value="Genomic_DNA"/>
</dbReference>
<dbReference type="RefSeq" id="WP_004203245.1">
    <property type="nucleotide sequence ID" value="NC_007435.1"/>
</dbReference>
<dbReference type="SMR" id="Q3JKH3"/>
<dbReference type="EnsemblBacteria" id="ABA51852">
    <property type="protein sequence ID" value="ABA51852"/>
    <property type="gene ID" value="BURPS1710b_A0771"/>
</dbReference>
<dbReference type="GeneID" id="93063899"/>
<dbReference type="KEGG" id="bpm:BURPS1710b_A0771"/>
<dbReference type="HOGENOM" id="CLU_014673_0_2_4"/>
<dbReference type="Proteomes" id="UP000002700">
    <property type="component" value="Chromosome II"/>
</dbReference>
<dbReference type="GO" id="GO:0003723">
    <property type="term" value="F:RNA binding"/>
    <property type="evidence" value="ECO:0007669"/>
    <property type="project" value="InterPro"/>
</dbReference>
<dbReference type="GO" id="GO:0160147">
    <property type="term" value="F:tRNA pseudouridine(38-40) synthase activity"/>
    <property type="evidence" value="ECO:0007669"/>
    <property type="project" value="UniProtKB-EC"/>
</dbReference>
<dbReference type="GO" id="GO:0031119">
    <property type="term" value="P:tRNA pseudouridine synthesis"/>
    <property type="evidence" value="ECO:0007669"/>
    <property type="project" value="UniProtKB-UniRule"/>
</dbReference>
<dbReference type="CDD" id="cd02570">
    <property type="entry name" value="PseudoU_synth_EcTruA"/>
    <property type="match status" value="1"/>
</dbReference>
<dbReference type="FunFam" id="3.30.70.580:FF:000001">
    <property type="entry name" value="tRNA pseudouridine synthase A"/>
    <property type="match status" value="1"/>
</dbReference>
<dbReference type="Gene3D" id="3.30.70.660">
    <property type="entry name" value="Pseudouridine synthase I, catalytic domain, C-terminal subdomain"/>
    <property type="match status" value="1"/>
</dbReference>
<dbReference type="Gene3D" id="3.30.70.580">
    <property type="entry name" value="Pseudouridine synthase I, catalytic domain, N-terminal subdomain"/>
    <property type="match status" value="1"/>
</dbReference>
<dbReference type="HAMAP" id="MF_00171">
    <property type="entry name" value="TruA"/>
    <property type="match status" value="1"/>
</dbReference>
<dbReference type="InterPro" id="IPR020103">
    <property type="entry name" value="PsdUridine_synth_cat_dom_sf"/>
</dbReference>
<dbReference type="InterPro" id="IPR001406">
    <property type="entry name" value="PsdUridine_synth_TruA"/>
</dbReference>
<dbReference type="InterPro" id="IPR020097">
    <property type="entry name" value="PsdUridine_synth_TruA_a/b_dom"/>
</dbReference>
<dbReference type="InterPro" id="IPR020095">
    <property type="entry name" value="PsdUridine_synth_TruA_C"/>
</dbReference>
<dbReference type="InterPro" id="IPR020094">
    <property type="entry name" value="TruA/RsuA/RluB/E/F_N"/>
</dbReference>
<dbReference type="NCBIfam" id="TIGR00071">
    <property type="entry name" value="hisT_truA"/>
    <property type="match status" value="1"/>
</dbReference>
<dbReference type="PANTHER" id="PTHR11142">
    <property type="entry name" value="PSEUDOURIDYLATE SYNTHASE"/>
    <property type="match status" value="1"/>
</dbReference>
<dbReference type="PANTHER" id="PTHR11142:SF0">
    <property type="entry name" value="TRNA PSEUDOURIDINE SYNTHASE-LIKE 1"/>
    <property type="match status" value="1"/>
</dbReference>
<dbReference type="Pfam" id="PF01416">
    <property type="entry name" value="PseudoU_synth_1"/>
    <property type="match status" value="2"/>
</dbReference>
<dbReference type="PIRSF" id="PIRSF001430">
    <property type="entry name" value="tRNA_psdUrid_synth"/>
    <property type="match status" value="1"/>
</dbReference>
<dbReference type="SUPFAM" id="SSF55120">
    <property type="entry name" value="Pseudouridine synthase"/>
    <property type="match status" value="1"/>
</dbReference>
<comment type="function">
    <text evidence="1">Formation of pseudouridine at positions 38, 39 and 40 in the anticodon stem and loop of transfer RNAs.</text>
</comment>
<comment type="catalytic activity">
    <reaction evidence="1">
        <text>uridine(38/39/40) in tRNA = pseudouridine(38/39/40) in tRNA</text>
        <dbReference type="Rhea" id="RHEA:22376"/>
        <dbReference type="Rhea" id="RHEA-COMP:10085"/>
        <dbReference type="Rhea" id="RHEA-COMP:10087"/>
        <dbReference type="ChEBI" id="CHEBI:65314"/>
        <dbReference type="ChEBI" id="CHEBI:65315"/>
        <dbReference type="EC" id="5.4.99.12"/>
    </reaction>
</comment>
<comment type="subunit">
    <text evidence="1">Homodimer.</text>
</comment>
<comment type="similarity">
    <text evidence="1">Belongs to the tRNA pseudouridine synthase TruA family.</text>
</comment>
<feature type="chain" id="PRO_1000017057" description="tRNA pseudouridine synthase A">
    <location>
        <begin position="1"/>
        <end position="270"/>
    </location>
</feature>
<feature type="active site" description="Nucleophile" evidence="1">
    <location>
        <position position="51"/>
    </location>
</feature>
<feature type="binding site" evidence="1">
    <location>
        <position position="109"/>
    </location>
    <ligand>
        <name>substrate</name>
    </ligand>
</feature>
<sequence length="270" mass="30014">MRIALGIQYDGAAFCGWQSQPHGKTVQDALERSLAEFAQTSLHTTVAGRTDTGVHGLGQVVHFDTDLDRADFSWVRGTNAFLPPTVAVQWAKPMPDTFHARFAAFERTYYYALYVHPVRSPMLAGRAGWVHTPLDVDAMREAAAHLVGEHDFSAFRSSECQAKSPVKHLYQIGIRPDGDFIHFRFRANAFLHHMVRNLMGCLVAVGRGRYPSSWLAEVLESRDRDCAAPTFMPEGLYLAHVGYPAEFAVPPAQLGSVPWSSVWADLDGRT</sequence>
<evidence type="ECO:0000255" key="1">
    <source>
        <dbReference type="HAMAP-Rule" id="MF_00171"/>
    </source>
</evidence>
<reference key="1">
    <citation type="journal article" date="2010" name="Genome Biol. Evol.">
        <title>Continuing evolution of Burkholderia mallei through genome reduction and large-scale rearrangements.</title>
        <authorList>
            <person name="Losada L."/>
            <person name="Ronning C.M."/>
            <person name="DeShazer D."/>
            <person name="Woods D."/>
            <person name="Fedorova N."/>
            <person name="Kim H.S."/>
            <person name="Shabalina S.A."/>
            <person name="Pearson T.R."/>
            <person name="Brinkac L."/>
            <person name="Tan P."/>
            <person name="Nandi T."/>
            <person name="Crabtree J."/>
            <person name="Badger J."/>
            <person name="Beckstrom-Sternberg S."/>
            <person name="Saqib M."/>
            <person name="Schutzer S.E."/>
            <person name="Keim P."/>
            <person name="Nierman W.C."/>
        </authorList>
    </citation>
    <scope>NUCLEOTIDE SEQUENCE [LARGE SCALE GENOMIC DNA]</scope>
    <source>
        <strain>1710b</strain>
    </source>
</reference>
<protein>
    <recommendedName>
        <fullName evidence="1">tRNA pseudouridine synthase A</fullName>
        <ecNumber evidence="1">5.4.99.12</ecNumber>
    </recommendedName>
    <alternativeName>
        <fullName evidence="1">tRNA pseudouridine(38-40) synthase</fullName>
    </alternativeName>
    <alternativeName>
        <fullName evidence="1">tRNA pseudouridylate synthase I</fullName>
    </alternativeName>
    <alternativeName>
        <fullName evidence="1">tRNA-uridine isomerase I</fullName>
    </alternativeName>
</protein>
<keyword id="KW-0413">Isomerase</keyword>
<keyword id="KW-0819">tRNA processing</keyword>
<name>TRUA_BURP1</name>
<organism>
    <name type="scientific">Burkholderia pseudomallei (strain 1710b)</name>
    <dbReference type="NCBI Taxonomy" id="320372"/>
    <lineage>
        <taxon>Bacteria</taxon>
        <taxon>Pseudomonadati</taxon>
        <taxon>Pseudomonadota</taxon>
        <taxon>Betaproteobacteria</taxon>
        <taxon>Burkholderiales</taxon>
        <taxon>Burkholderiaceae</taxon>
        <taxon>Burkholderia</taxon>
        <taxon>pseudomallei group</taxon>
    </lineage>
</organism>
<accession>Q3JKH3</accession>
<gene>
    <name evidence="1" type="primary">truA</name>
    <name type="ordered locus">BURPS1710b_A0771</name>
</gene>
<proteinExistence type="inferred from homology"/>